<accession>Q5TIA1</accession>
<accession>B7Z745</accession>
<accession>Q1XAP1</accession>
<accession>Q1XAP2</accession>
<accession>Q8IYJ5</accession>
<accession>Q8N5K5</accession>
<accession>Q8N9H3</accession>
<accession>Q8TC68</accession>
<proteinExistence type="evidence at protein level"/>
<reference evidence="13 17" key="1">
    <citation type="journal article" date="2006" name="J. Hum. Genet.">
        <title>Polymorphic alleles of the human MEI1 gene are associated with human azoospermia by meiotic arrest.</title>
        <authorList>
            <person name="Sato H."/>
            <person name="Miyamoto T."/>
            <person name="Yogev L."/>
            <person name="Namiki M."/>
            <person name="Koh E."/>
            <person name="Hayashi H."/>
            <person name="Sasaki Y."/>
            <person name="Ishikawa M."/>
            <person name="Lamb D.J."/>
            <person name="Matsumoto N."/>
            <person name="Birk O.S."/>
            <person name="Niikawa N."/>
            <person name="Sengoku K."/>
        </authorList>
    </citation>
    <scope>NUCLEOTIDE SEQUENCE [MRNA] (ISOFORMS 2 AND 3)</scope>
    <scope>TISSUE SPECIFICITY</scope>
    <scope>POSSIBLE INVOLVEMENT IN AZOOSPERMIA</scope>
</reference>
<reference evidence="13 18" key="2">
    <citation type="journal article" date="2004" name="Nat. Genet.">
        <title>Complete sequencing and characterization of 21,243 full-length human cDNAs.</title>
        <authorList>
            <person name="Ota T."/>
            <person name="Suzuki Y."/>
            <person name="Nishikawa T."/>
            <person name="Otsuki T."/>
            <person name="Sugiyama T."/>
            <person name="Irie R."/>
            <person name="Wakamatsu A."/>
            <person name="Hayashi K."/>
            <person name="Sato H."/>
            <person name="Nagai K."/>
            <person name="Kimura K."/>
            <person name="Makita H."/>
            <person name="Sekine M."/>
            <person name="Obayashi M."/>
            <person name="Nishi T."/>
            <person name="Shibahara T."/>
            <person name="Tanaka T."/>
            <person name="Ishii S."/>
            <person name="Yamamoto J."/>
            <person name="Saito K."/>
            <person name="Kawai Y."/>
            <person name="Isono Y."/>
            <person name="Nakamura Y."/>
            <person name="Nagahari K."/>
            <person name="Murakami K."/>
            <person name="Yasuda T."/>
            <person name="Iwayanagi T."/>
            <person name="Wagatsuma M."/>
            <person name="Shiratori A."/>
            <person name="Sudo H."/>
            <person name="Hosoiri T."/>
            <person name="Kaku Y."/>
            <person name="Kodaira H."/>
            <person name="Kondo H."/>
            <person name="Sugawara M."/>
            <person name="Takahashi M."/>
            <person name="Kanda K."/>
            <person name="Yokoi T."/>
            <person name="Furuya T."/>
            <person name="Kikkawa E."/>
            <person name="Omura Y."/>
            <person name="Abe K."/>
            <person name="Kamihara K."/>
            <person name="Katsuta N."/>
            <person name="Sato K."/>
            <person name="Tanikawa M."/>
            <person name="Yamazaki M."/>
            <person name="Ninomiya K."/>
            <person name="Ishibashi T."/>
            <person name="Yamashita H."/>
            <person name="Murakawa K."/>
            <person name="Fujimori K."/>
            <person name="Tanai H."/>
            <person name="Kimata M."/>
            <person name="Watanabe M."/>
            <person name="Hiraoka S."/>
            <person name="Chiba Y."/>
            <person name="Ishida S."/>
            <person name="Ono Y."/>
            <person name="Takiguchi S."/>
            <person name="Watanabe S."/>
            <person name="Yosida M."/>
            <person name="Hotuta T."/>
            <person name="Kusano J."/>
            <person name="Kanehori K."/>
            <person name="Takahashi-Fujii A."/>
            <person name="Hara H."/>
            <person name="Tanase T.-O."/>
            <person name="Nomura Y."/>
            <person name="Togiya S."/>
            <person name="Komai F."/>
            <person name="Hara R."/>
            <person name="Takeuchi K."/>
            <person name="Arita M."/>
            <person name="Imose N."/>
            <person name="Musashino K."/>
            <person name="Yuuki H."/>
            <person name="Oshima A."/>
            <person name="Sasaki N."/>
            <person name="Aotsuka S."/>
            <person name="Yoshikawa Y."/>
            <person name="Matsunawa H."/>
            <person name="Ichihara T."/>
            <person name="Shiohata N."/>
            <person name="Sano S."/>
            <person name="Moriya S."/>
            <person name="Momiyama H."/>
            <person name="Satoh N."/>
            <person name="Takami S."/>
            <person name="Terashima Y."/>
            <person name="Suzuki O."/>
            <person name="Nakagawa S."/>
            <person name="Senoh A."/>
            <person name="Mizoguchi H."/>
            <person name="Goto Y."/>
            <person name="Shimizu F."/>
            <person name="Wakebe H."/>
            <person name="Hishigaki H."/>
            <person name="Watanabe T."/>
            <person name="Sugiyama A."/>
            <person name="Takemoto M."/>
            <person name="Kawakami B."/>
            <person name="Yamazaki M."/>
            <person name="Watanabe K."/>
            <person name="Kumagai A."/>
            <person name="Itakura S."/>
            <person name="Fukuzumi Y."/>
            <person name="Fujimori Y."/>
            <person name="Komiyama M."/>
            <person name="Tashiro H."/>
            <person name="Tanigami A."/>
            <person name="Fujiwara T."/>
            <person name="Ono T."/>
            <person name="Yamada K."/>
            <person name="Fujii Y."/>
            <person name="Ozaki K."/>
            <person name="Hirao M."/>
            <person name="Ohmori Y."/>
            <person name="Kawabata A."/>
            <person name="Hikiji T."/>
            <person name="Kobatake N."/>
            <person name="Inagaki H."/>
            <person name="Ikema Y."/>
            <person name="Okamoto S."/>
            <person name="Okitani R."/>
            <person name="Kawakami T."/>
            <person name="Noguchi S."/>
            <person name="Itoh T."/>
            <person name="Shigeta K."/>
            <person name="Senba T."/>
            <person name="Matsumura K."/>
            <person name="Nakajima Y."/>
            <person name="Mizuno T."/>
            <person name="Morinaga M."/>
            <person name="Sasaki M."/>
            <person name="Togashi T."/>
            <person name="Oyama M."/>
            <person name="Hata H."/>
            <person name="Watanabe M."/>
            <person name="Komatsu T."/>
            <person name="Mizushima-Sugano J."/>
            <person name="Satoh T."/>
            <person name="Shirai Y."/>
            <person name="Takahashi Y."/>
            <person name="Nakagawa K."/>
            <person name="Okumura K."/>
            <person name="Nagase T."/>
            <person name="Nomura N."/>
            <person name="Kikuchi H."/>
            <person name="Masuho Y."/>
            <person name="Yamashita R."/>
            <person name="Nakai K."/>
            <person name="Yada T."/>
            <person name="Nakamura Y."/>
            <person name="Ohara O."/>
            <person name="Isogai T."/>
            <person name="Sugano S."/>
        </authorList>
    </citation>
    <scope>NUCLEOTIDE SEQUENCE [LARGE SCALE MRNA] (ISOFORMS 2 AND 5)</scope>
    <source>
        <tissue evidence="18">Cerebellum</tissue>
        <tissue>Synovial cell</tissue>
    </source>
</reference>
<reference evidence="19" key="3">
    <citation type="journal article" date="1999" name="Nature">
        <title>The DNA sequence of human chromosome 22.</title>
        <authorList>
            <person name="Dunham I."/>
            <person name="Hunt A.R."/>
            <person name="Collins J.E."/>
            <person name="Bruskiewich R."/>
            <person name="Beare D.M."/>
            <person name="Clamp M."/>
            <person name="Smink L.J."/>
            <person name="Ainscough R."/>
            <person name="Almeida J.P."/>
            <person name="Babbage A.K."/>
            <person name="Bagguley C."/>
            <person name="Bailey J."/>
            <person name="Barlow K.F."/>
            <person name="Bates K.N."/>
            <person name="Beasley O.P."/>
            <person name="Bird C.P."/>
            <person name="Blakey S.E."/>
            <person name="Bridgeman A.M."/>
            <person name="Buck D."/>
            <person name="Burgess J."/>
            <person name="Burrill W.D."/>
            <person name="Burton J."/>
            <person name="Carder C."/>
            <person name="Carter N.P."/>
            <person name="Chen Y."/>
            <person name="Clark G."/>
            <person name="Clegg S.M."/>
            <person name="Cobley V.E."/>
            <person name="Cole C.G."/>
            <person name="Collier R.E."/>
            <person name="Connor R."/>
            <person name="Conroy D."/>
            <person name="Corby N.R."/>
            <person name="Coville G.J."/>
            <person name="Cox A.V."/>
            <person name="Davis J."/>
            <person name="Dawson E."/>
            <person name="Dhami P.D."/>
            <person name="Dockree C."/>
            <person name="Dodsworth S.J."/>
            <person name="Durbin R.M."/>
            <person name="Ellington A.G."/>
            <person name="Evans K.L."/>
            <person name="Fey J.M."/>
            <person name="Fleming K."/>
            <person name="French L."/>
            <person name="Garner A.A."/>
            <person name="Gilbert J.G.R."/>
            <person name="Goward M.E."/>
            <person name="Grafham D.V."/>
            <person name="Griffiths M.N.D."/>
            <person name="Hall C."/>
            <person name="Hall R.E."/>
            <person name="Hall-Tamlyn G."/>
            <person name="Heathcott R.W."/>
            <person name="Ho S."/>
            <person name="Holmes S."/>
            <person name="Hunt S.E."/>
            <person name="Jones M.C."/>
            <person name="Kershaw J."/>
            <person name="Kimberley A.M."/>
            <person name="King A."/>
            <person name="Laird G.K."/>
            <person name="Langford C.F."/>
            <person name="Leversha M.A."/>
            <person name="Lloyd C."/>
            <person name="Lloyd D.M."/>
            <person name="Martyn I.D."/>
            <person name="Mashreghi-Mohammadi M."/>
            <person name="Matthews L.H."/>
            <person name="Mccann O.T."/>
            <person name="Mcclay J."/>
            <person name="Mclaren S."/>
            <person name="McMurray A.A."/>
            <person name="Milne S.A."/>
            <person name="Mortimore B.J."/>
            <person name="Odell C.N."/>
            <person name="Pavitt R."/>
            <person name="Pearce A.V."/>
            <person name="Pearson D."/>
            <person name="Phillimore B.J.C.T."/>
            <person name="Phillips S.H."/>
            <person name="Plumb R.W."/>
            <person name="Ramsay H."/>
            <person name="Ramsey Y."/>
            <person name="Rogers L."/>
            <person name="Ross M.T."/>
            <person name="Scott C.E."/>
            <person name="Sehra H.K."/>
            <person name="Skuce C.D."/>
            <person name="Smalley S."/>
            <person name="Smith M.L."/>
            <person name="Soderlund C."/>
            <person name="Spragon L."/>
            <person name="Steward C.A."/>
            <person name="Sulston J.E."/>
            <person name="Swann R.M."/>
            <person name="Vaudin M."/>
            <person name="Wall M."/>
            <person name="Wallis J.M."/>
            <person name="Whiteley M.N."/>
            <person name="Willey D.L."/>
            <person name="Williams L."/>
            <person name="Williams S.A."/>
            <person name="Williamson H."/>
            <person name="Wilmer T.E."/>
            <person name="Wilming L."/>
            <person name="Wright C.L."/>
            <person name="Hubbard T."/>
            <person name="Bentley D.R."/>
            <person name="Beck S."/>
            <person name="Rogers J."/>
            <person name="Shimizu N."/>
            <person name="Minoshima S."/>
            <person name="Kawasaki K."/>
            <person name="Sasaki T."/>
            <person name="Asakawa S."/>
            <person name="Kudoh J."/>
            <person name="Shintani A."/>
            <person name="Shibuya K."/>
            <person name="Yoshizaki Y."/>
            <person name="Aoki N."/>
            <person name="Mitsuyama S."/>
            <person name="Roe B.A."/>
            <person name="Chen F."/>
            <person name="Chu L."/>
            <person name="Crabtree J."/>
            <person name="Deschamps S."/>
            <person name="Do A."/>
            <person name="Do T."/>
            <person name="Dorman A."/>
            <person name="Fang F."/>
            <person name="Fu Y."/>
            <person name="Hu P."/>
            <person name="Hua A."/>
            <person name="Kenton S."/>
            <person name="Lai H."/>
            <person name="Lao H.I."/>
            <person name="Lewis J."/>
            <person name="Lewis S."/>
            <person name="Lin S.-P."/>
            <person name="Loh P."/>
            <person name="Malaj E."/>
            <person name="Nguyen T."/>
            <person name="Pan H."/>
            <person name="Phan S."/>
            <person name="Qi S."/>
            <person name="Qian Y."/>
            <person name="Ray L."/>
            <person name="Ren Q."/>
            <person name="Shaull S."/>
            <person name="Sloan D."/>
            <person name="Song L."/>
            <person name="Wang Q."/>
            <person name="Wang Y."/>
            <person name="Wang Z."/>
            <person name="White J."/>
            <person name="Willingham D."/>
            <person name="Wu H."/>
            <person name="Yao Z."/>
            <person name="Zhan M."/>
            <person name="Zhang G."/>
            <person name="Chissoe S."/>
            <person name="Murray J."/>
            <person name="Miller N."/>
            <person name="Minx P."/>
            <person name="Fulton R."/>
            <person name="Johnson D."/>
            <person name="Bemis G."/>
            <person name="Bentley D."/>
            <person name="Bradshaw H."/>
            <person name="Bourne S."/>
            <person name="Cordes M."/>
            <person name="Du Z."/>
            <person name="Fulton L."/>
            <person name="Goela D."/>
            <person name="Graves T."/>
            <person name="Hawkins J."/>
            <person name="Hinds K."/>
            <person name="Kemp K."/>
            <person name="Latreille P."/>
            <person name="Layman D."/>
            <person name="Ozersky P."/>
            <person name="Rohlfing T."/>
            <person name="Scheet P."/>
            <person name="Walker C."/>
            <person name="Wamsley A."/>
            <person name="Wohldmann P."/>
            <person name="Pepin K."/>
            <person name="Nelson J."/>
            <person name="Korf I."/>
            <person name="Bedell J.A."/>
            <person name="Hillier L.W."/>
            <person name="Mardis E."/>
            <person name="Waterston R."/>
            <person name="Wilson R."/>
            <person name="Emanuel B.S."/>
            <person name="Shaikh T."/>
            <person name="Kurahashi H."/>
            <person name="Saitta S."/>
            <person name="Budarf M.L."/>
            <person name="McDermid H.E."/>
            <person name="Johnson A."/>
            <person name="Wong A.C.C."/>
            <person name="Morrow B.E."/>
            <person name="Edelmann L."/>
            <person name="Kim U.J."/>
            <person name="Shizuya H."/>
            <person name="Simon M.I."/>
            <person name="Dumanski J.P."/>
            <person name="Peyrard M."/>
            <person name="Kedra D."/>
            <person name="Seroussi E."/>
            <person name="Fransson I."/>
            <person name="Tapia I."/>
            <person name="Bruder C.E."/>
            <person name="O'Brien K.P."/>
            <person name="Wilkinson P."/>
            <person name="Bodenteich A."/>
            <person name="Hartman K."/>
            <person name="Hu X."/>
            <person name="Khan A.S."/>
            <person name="Lane L."/>
            <person name="Tilahun Y."/>
            <person name="Wright H."/>
        </authorList>
    </citation>
    <scope>NUCLEOTIDE SEQUENCE [LARGE SCALE GENOMIC DNA]</scope>
</reference>
<reference evidence="13 14" key="4">
    <citation type="journal article" date="2004" name="Genome Res.">
        <title>The status, quality, and expansion of the NIH full-length cDNA project: the Mammalian Gene Collection (MGC).</title>
        <authorList>
            <consortium name="The MGC Project Team"/>
        </authorList>
    </citation>
    <scope>NUCLEOTIDE SEQUENCE [LARGE SCALE MRNA] (ISOFORMS 4; 6 AND 7)</scope>
    <source>
        <tissue evidence="15">Leukocyte</tissue>
        <tissue evidence="16">Ovary</tissue>
        <tissue evidence="14">Testis</tissue>
    </source>
</reference>
<reference key="5">
    <citation type="journal article" date="2017" name="Andrology">
        <title>Next-generation sequencing for patients with non-obstructive azoospermia: implications for significant roles of monogenic/oligogenic mutations.</title>
        <authorList>
            <person name="Nakamura S."/>
            <person name="Miyado M."/>
            <person name="Saito K."/>
            <person name="Katsumi M."/>
            <person name="Nakamura A."/>
            <person name="Kobori Y."/>
            <person name="Tanaka Y."/>
            <person name="Ishikawa H."/>
            <person name="Yoshida A."/>
            <person name="Okada H."/>
            <person name="Hata K."/>
            <person name="Nakabayashi K."/>
            <person name="Okamura K."/>
            <person name="Ogata H."/>
            <person name="Matsubara Y."/>
            <person name="Ogata T."/>
            <person name="Nakai H."/>
            <person name="Fukami M."/>
        </authorList>
    </citation>
    <scope>VARIANT ARG-408</scope>
    <scope>POSSIBLE INVOLVEMENT IN AZOOSPERMIA</scope>
</reference>
<reference key="6">
    <citation type="journal article" date="2018" name="Am. J. Hum. Genet.">
        <title>Causative mutations and mechanism of androgenetic hydatidiform moles.</title>
        <authorList>
            <person name="Nguyen N.M.P."/>
            <person name="Ge Z.J."/>
            <person name="Reddy R."/>
            <person name="Fahiminiya S."/>
            <person name="Sauthier P."/>
            <person name="Bagga R."/>
            <person name="Sahin F.I."/>
            <person name="Mahadevan S."/>
            <person name="Osmond M."/>
            <person name="Breguet M."/>
            <person name="Rahimi K."/>
            <person name="Lapensee L."/>
            <person name="Hovanes K."/>
            <person name="Srinivasan R."/>
            <person name="Van den Veyver I.B."/>
            <person name="Sahoo T."/>
            <person name="Ao A."/>
            <person name="Majewski J."/>
            <person name="Taketo T."/>
            <person name="Slim R."/>
        </authorList>
    </citation>
    <scope>VARIANT HYDM3 1151-TRP--ASN-1274 DEL</scope>
    <scope>INVOLVEMENT IN HYDM3</scope>
    <scope>TISSUE SPECIFICITY</scope>
</reference>
<reference key="7">
    <citation type="journal article" date="2020" name="Genet. Med.">
        <title>Genetic dissection of spermatogenic arrest through exome analysis: clinical implications for the management of azoospermic men.</title>
        <authorList>
            <person name="Krausz C."/>
            <person name="Riera-Escamilla A."/>
            <person name="Moreno-Mendoza D."/>
            <person name="Holleman K."/>
            <person name="Cioppi F."/>
            <person name="Algaba F."/>
            <person name="Pybus M."/>
            <person name="Friedrich C."/>
            <person name="Wyrwoll M.J."/>
            <person name="Casamonti E."/>
            <person name="Pietroforte S."/>
            <person name="Nagirnaja L."/>
            <person name="Lopes A.M."/>
            <person name="Kliesch S."/>
            <person name="Pilatz A."/>
            <person name="Carrell D.T."/>
            <person name="Conrad D.F."/>
            <person name="Ars E."/>
            <person name="Ruiz-Castane E."/>
            <person name="Aston K.I."/>
            <person name="Baarends W.M."/>
            <person name="Tuettelmann F."/>
        </authorList>
    </citation>
    <scope>VARIANTS PHE-309 AND MET-363</scope>
</reference>
<gene>
    <name evidence="20" type="primary">MEI1</name>
</gene>
<keyword id="KW-0025">Alternative splicing</keyword>
<keyword id="KW-0225">Disease variant</keyword>
<keyword id="KW-0469">Meiosis</keyword>
<keyword id="KW-1185">Reference proteome</keyword>
<name>MEI1_HUMAN</name>
<organism>
    <name type="scientific">Homo sapiens</name>
    <name type="common">Human</name>
    <dbReference type="NCBI Taxonomy" id="9606"/>
    <lineage>
        <taxon>Eukaryota</taxon>
        <taxon>Metazoa</taxon>
        <taxon>Chordata</taxon>
        <taxon>Craniata</taxon>
        <taxon>Vertebrata</taxon>
        <taxon>Euteleostomi</taxon>
        <taxon>Mammalia</taxon>
        <taxon>Eutheria</taxon>
        <taxon>Euarchontoglires</taxon>
        <taxon>Primates</taxon>
        <taxon>Haplorrhini</taxon>
        <taxon>Catarrhini</taxon>
        <taxon>Hominidae</taxon>
        <taxon>Homo</taxon>
    </lineage>
</organism>
<dbReference type="EMBL" id="AY952376">
    <property type="protein sequence ID" value="AAY27427.1"/>
    <property type="molecule type" value="mRNA"/>
</dbReference>
<dbReference type="EMBL" id="AY952377">
    <property type="protein sequence ID" value="AAY27428.1"/>
    <property type="molecule type" value="mRNA"/>
</dbReference>
<dbReference type="EMBL" id="AK094461">
    <property type="protein sequence ID" value="BAC04361.1"/>
    <property type="molecule type" value="mRNA"/>
</dbReference>
<dbReference type="EMBL" id="AK301435">
    <property type="protein sequence ID" value="BAH13481.1"/>
    <property type="molecule type" value="mRNA"/>
</dbReference>
<dbReference type="EMBL" id="AL021453">
    <property type="status" value="NOT_ANNOTATED_CDS"/>
    <property type="molecule type" value="Genomic_DNA"/>
</dbReference>
<dbReference type="EMBL" id="AL023879">
    <property type="status" value="NOT_ANNOTATED_CDS"/>
    <property type="molecule type" value="Genomic_DNA"/>
</dbReference>
<dbReference type="EMBL" id="Z83840">
    <property type="status" value="NOT_ANNOTATED_CDS"/>
    <property type="molecule type" value="Genomic_DNA"/>
</dbReference>
<dbReference type="EMBL" id="BC025400">
    <property type="protein sequence ID" value="AAH25400.1"/>
    <property type="status" value="ALT_INIT"/>
    <property type="molecule type" value="mRNA"/>
</dbReference>
<dbReference type="EMBL" id="BC032248">
    <property type="protein sequence ID" value="AAH32248.1"/>
    <property type="molecule type" value="mRNA"/>
</dbReference>
<dbReference type="EMBL" id="BC035720">
    <property type="protein sequence ID" value="AAH35720.1"/>
    <property type="status" value="ALT_INIT"/>
    <property type="molecule type" value="mRNA"/>
</dbReference>
<dbReference type="CCDS" id="CCDS46718.1">
    <molecule id="Q5TIA1-1"/>
</dbReference>
<dbReference type="RefSeq" id="NP_689726.3">
    <molecule id="Q5TIA1-1"/>
    <property type="nucleotide sequence ID" value="NM_152513.3"/>
</dbReference>
<dbReference type="SMR" id="Q5TIA1"/>
<dbReference type="BioGRID" id="127286">
    <property type="interactions" value="9"/>
</dbReference>
<dbReference type="FunCoup" id="Q5TIA1">
    <property type="interactions" value="58"/>
</dbReference>
<dbReference type="IntAct" id="Q5TIA1">
    <property type="interactions" value="7"/>
</dbReference>
<dbReference type="STRING" id="9606.ENSP00000384115"/>
<dbReference type="GlyGen" id="Q5TIA1">
    <property type="glycosylation" value="2 sites, 1 O-linked glycan (1 site)"/>
</dbReference>
<dbReference type="iPTMnet" id="Q5TIA1"/>
<dbReference type="PhosphoSitePlus" id="Q5TIA1"/>
<dbReference type="BioMuta" id="MEI1"/>
<dbReference type="DMDM" id="205815070"/>
<dbReference type="MassIVE" id="Q5TIA1"/>
<dbReference type="PaxDb" id="9606-ENSP00000384115"/>
<dbReference type="PeptideAtlas" id="Q5TIA1"/>
<dbReference type="ProteomicsDB" id="65181">
    <molecule id="Q5TIA1-1"/>
</dbReference>
<dbReference type="ProteomicsDB" id="65182">
    <molecule id="Q5TIA1-2"/>
</dbReference>
<dbReference type="ProteomicsDB" id="65183">
    <molecule id="Q5TIA1-3"/>
</dbReference>
<dbReference type="ProteomicsDB" id="65185">
    <molecule id="Q5TIA1-5"/>
</dbReference>
<dbReference type="Antibodypedia" id="27052">
    <property type="antibodies" value="78 antibodies from 16 providers"/>
</dbReference>
<dbReference type="DNASU" id="150365"/>
<dbReference type="Ensembl" id="ENST00000401548.8">
    <molecule id="Q5TIA1-1"/>
    <property type="protein sequence ID" value="ENSP00000384115.3"/>
    <property type="gene ID" value="ENSG00000167077.13"/>
</dbReference>
<dbReference type="Ensembl" id="ENST00000403492.5">
    <molecule id="Q5TIA1-7"/>
    <property type="protein sequence ID" value="ENSP00000385298.1"/>
    <property type="gene ID" value="ENSG00000167077.13"/>
</dbReference>
<dbReference type="GeneID" id="150365"/>
<dbReference type="KEGG" id="hsa:150365"/>
<dbReference type="MANE-Select" id="ENST00000401548.8">
    <property type="protein sequence ID" value="ENSP00000384115.3"/>
    <property type="RefSeq nucleotide sequence ID" value="NM_152513.4"/>
    <property type="RefSeq protein sequence ID" value="NP_689726.3"/>
</dbReference>
<dbReference type="UCSC" id="uc003baz.2">
    <molecule id="Q5TIA1-1"/>
    <property type="organism name" value="human"/>
</dbReference>
<dbReference type="AGR" id="HGNC:28613"/>
<dbReference type="CTD" id="150365"/>
<dbReference type="DisGeNET" id="150365"/>
<dbReference type="GeneCards" id="MEI1"/>
<dbReference type="HGNC" id="HGNC:28613">
    <property type="gene designation" value="MEI1"/>
</dbReference>
<dbReference type="HPA" id="ENSG00000167077">
    <property type="expression patterns" value="Tissue enhanced (lymphoid tissue, testis)"/>
</dbReference>
<dbReference type="MalaCards" id="MEI1"/>
<dbReference type="MIM" id="608797">
    <property type="type" value="gene"/>
</dbReference>
<dbReference type="MIM" id="618431">
    <property type="type" value="phenotype"/>
</dbReference>
<dbReference type="neXtProt" id="NX_Q5TIA1"/>
<dbReference type="OpenTargets" id="ENSG00000167077"/>
<dbReference type="Orphanet" id="254688">
    <property type="disease" value="Complete hydatidiform mole"/>
</dbReference>
<dbReference type="PharmGKB" id="PA162395678"/>
<dbReference type="VEuPathDB" id="HostDB:ENSG00000167077"/>
<dbReference type="eggNOG" id="ENOG502QV5Z">
    <property type="taxonomic scope" value="Eukaryota"/>
</dbReference>
<dbReference type="GeneTree" id="ENSGT00390000002077"/>
<dbReference type="HOGENOM" id="CLU_006759_0_0_1"/>
<dbReference type="InParanoid" id="Q5TIA1"/>
<dbReference type="OMA" id="RVCIHFI"/>
<dbReference type="OrthoDB" id="10015792at2759"/>
<dbReference type="PAN-GO" id="Q5TIA1">
    <property type="GO annotations" value="1 GO annotation based on evolutionary models"/>
</dbReference>
<dbReference type="PhylomeDB" id="Q5TIA1"/>
<dbReference type="TreeFam" id="TF336500"/>
<dbReference type="PathwayCommons" id="Q5TIA1"/>
<dbReference type="SignaLink" id="Q5TIA1"/>
<dbReference type="BioGRID-ORCS" id="150365">
    <property type="hits" value="11 hits in 1149 CRISPR screens"/>
</dbReference>
<dbReference type="ChiTaRS" id="MEI1">
    <property type="organism name" value="human"/>
</dbReference>
<dbReference type="GenomeRNAi" id="150365"/>
<dbReference type="Pharos" id="Q5TIA1">
    <property type="development level" value="Tbio"/>
</dbReference>
<dbReference type="PRO" id="PR:Q5TIA1"/>
<dbReference type="Proteomes" id="UP000005640">
    <property type="component" value="Chromosome 22"/>
</dbReference>
<dbReference type="RNAct" id="Q5TIA1">
    <property type="molecule type" value="protein"/>
</dbReference>
<dbReference type="Bgee" id="ENSG00000167077">
    <property type="expression patterns" value="Expressed in bone marrow cell and 116 other cell types or tissues"/>
</dbReference>
<dbReference type="ExpressionAtlas" id="Q5TIA1">
    <property type="expression patterns" value="baseline and differential"/>
</dbReference>
<dbReference type="GO" id="GO:0007127">
    <property type="term" value="P:meiosis I"/>
    <property type="evidence" value="ECO:0000318"/>
    <property type="project" value="GO_Central"/>
</dbReference>
<dbReference type="Gene3D" id="1.25.10.10">
    <property type="entry name" value="Leucine-rich Repeat Variant"/>
    <property type="match status" value="1"/>
</dbReference>
<dbReference type="InterPro" id="IPR011989">
    <property type="entry name" value="ARM-like"/>
</dbReference>
<dbReference type="InterPro" id="IPR016024">
    <property type="entry name" value="ARM-type_fold"/>
</dbReference>
<dbReference type="InterPro" id="IPR052133">
    <property type="entry name" value="Immune_Signaling-Apoptosis_Reg"/>
</dbReference>
<dbReference type="PANTHER" id="PTHR12044">
    <property type="entry name" value="BCL2 INTERACTING MEDIATOR OF CELL DEATH"/>
    <property type="match status" value="1"/>
</dbReference>
<dbReference type="PANTHER" id="PTHR12044:SF10">
    <property type="entry name" value="MEIOSIS INHIBITOR PROTEIN 1"/>
    <property type="match status" value="1"/>
</dbReference>
<dbReference type="SUPFAM" id="SSF48371">
    <property type="entry name" value="ARM repeat"/>
    <property type="match status" value="1"/>
</dbReference>
<protein>
    <recommendedName>
        <fullName>Meiosis inhibitor protein 1</fullName>
    </recommendedName>
    <alternativeName>
        <fullName>Meiosis defective protein 1</fullName>
    </alternativeName>
</protein>
<feature type="chain" id="PRO_0000347264" description="Meiosis inhibitor protein 1">
    <location>
        <begin position="1"/>
        <end position="1274"/>
    </location>
</feature>
<feature type="splice variant" id="VSP_052883" description="In isoform 7." evidence="9 11">
    <location>
        <begin position="1"/>
        <end position="992"/>
    </location>
</feature>
<feature type="splice variant" id="VSP_052884" description="In isoform 5." evidence="10">
    <location>
        <begin position="1"/>
        <end position="757"/>
    </location>
</feature>
<feature type="splice variant" id="VSP_052885" description="In isoform 2 and isoform 3." evidence="10 12">
    <location>
        <begin position="1"/>
        <end position="632"/>
    </location>
</feature>
<feature type="splice variant" id="VSP_052886" description="In isoform 6." evidence="11">
    <location>
        <begin position="445"/>
        <end position="1274"/>
    </location>
</feature>
<feature type="splice variant" id="VSP_052887" description="In isoform 4." evidence="11">
    <original>RHLEQTTHP</original>
    <variation>VGSPEPRAT</variation>
    <location>
        <begin position="561"/>
        <end position="569"/>
    </location>
</feature>
<feature type="splice variant" id="VSP_052888" description="In isoform 4." evidence="11">
    <location>
        <begin position="570"/>
        <end position="1274"/>
    </location>
</feature>
<feature type="splice variant" id="VSP_052889" description="In isoform 3." evidence="12">
    <location>
        <begin position="904"/>
        <end position="938"/>
    </location>
</feature>
<feature type="splice variant" id="VSP_052890" description="In isoform 7." evidence="9 11">
    <location>
        <begin position="1179"/>
        <end position="1222"/>
    </location>
</feature>
<feature type="splice variant" id="VSP_052891" description="In isoform 5." evidence="10">
    <location>
        <begin position="1193"/>
        <end position="1222"/>
    </location>
</feature>
<feature type="sequence variant" id="VAR_087425" description="Found in a patient with non-obstructive azoospermia; uncertain significance." evidence="8">
    <original>L</original>
    <variation>F</variation>
    <location>
        <position position="309"/>
    </location>
</feature>
<feature type="sequence variant" id="VAR_087426" description="Found in a patient with non-obstructive azoospermia; uncertain significance; dbSNP:rs370146597." evidence="8">
    <original>T</original>
    <variation>M</variation>
    <location>
        <position position="363"/>
    </location>
</feature>
<feature type="sequence variant" id="VAR_081145" description="Found in patients with non-obstructive azoospermia; uncertain significance; dbSNP:rs533817526." evidence="6">
    <original>T</original>
    <variation>R</variation>
    <location>
        <position position="408"/>
    </location>
</feature>
<feature type="sequence variant" id="VAR_046037" description="In dbSNP:rs17002655.">
    <original>E</original>
    <variation>Q</variation>
    <location>
        <position position="657"/>
    </location>
</feature>
<feature type="sequence variant" id="VAR_046038" description="In dbSNP:rs17002665.">
    <original>S</original>
    <variation>T</variation>
    <location>
        <position position="853"/>
    </location>
</feature>
<feature type="sequence variant" id="VAR_051184" description="In dbSNP:rs12484839.">
    <original>K</original>
    <variation>E</variation>
    <location>
        <position position="1049"/>
    </location>
</feature>
<feature type="sequence variant" id="VAR_082605" description="In HYDM3; the variant leads to a normally spliced transcript and two abnormal isoforms." evidence="7">
    <location>
        <begin position="1151"/>
        <end position="1274"/>
    </location>
</feature>
<feature type="sequence conflict" description="In Ref. 4; AAH35720." evidence="13" ref="4">
    <original>I</original>
    <variation>T</variation>
    <location>
        <position position="367"/>
    </location>
</feature>
<evidence type="ECO:0000250" key="1">
    <source>
        <dbReference type="UniProtKB" id="Q9D4I2"/>
    </source>
</evidence>
<evidence type="ECO:0000269" key="2">
    <source>
    </source>
</evidence>
<evidence type="ECO:0000269" key="3">
    <source>
    </source>
</evidence>
<evidence type="ECO:0000269" key="4">
    <source>
    </source>
</evidence>
<evidence type="ECO:0000269" key="5">
    <source>
    </source>
</evidence>
<evidence type="ECO:0000269" key="6">
    <source>
    </source>
</evidence>
<evidence type="ECO:0000269" key="7">
    <source>
    </source>
</evidence>
<evidence type="ECO:0000269" key="8">
    <source>
    </source>
</evidence>
<evidence type="ECO:0000303" key="9">
    <source>
    </source>
</evidence>
<evidence type="ECO:0000303" key="10">
    <source>
    </source>
</evidence>
<evidence type="ECO:0000303" key="11">
    <source>
    </source>
</evidence>
<evidence type="ECO:0000303" key="12">
    <source>
    </source>
</evidence>
<evidence type="ECO:0000305" key="13"/>
<evidence type="ECO:0000312" key="14">
    <source>
        <dbReference type="EMBL" id="AAH25400.1"/>
    </source>
</evidence>
<evidence type="ECO:0000312" key="15">
    <source>
        <dbReference type="EMBL" id="AAH32248.1"/>
    </source>
</evidence>
<evidence type="ECO:0000312" key="16">
    <source>
        <dbReference type="EMBL" id="AAH35720.1"/>
    </source>
</evidence>
<evidence type="ECO:0000312" key="17">
    <source>
        <dbReference type="EMBL" id="AAY27427.1"/>
    </source>
</evidence>
<evidence type="ECO:0000312" key="18">
    <source>
        <dbReference type="EMBL" id="BAC04361.1"/>
    </source>
</evidence>
<evidence type="ECO:0000312" key="19">
    <source>
        <dbReference type="EMBL" id="Z83840"/>
    </source>
</evidence>
<evidence type="ECO:0000312" key="20">
    <source>
        <dbReference type="HGNC" id="HGNC:28613"/>
    </source>
</evidence>
<sequence length="1274" mass="141161">MAVRQAATAGTPGPRREEEAALLFERAHYRHDPRWLLPVTPRLCLACALELLPDPGVSLVRKKHMLSCFQDALVRHTSLVTQLVSQDQRVCIHFISVLFGLLCSMEDGSVTDLCIEVLIQITTQLKLEQTIRCLLDECHKELCNMPSMRGSLATLTLLGKLVDAIPALADELVMEHGNLMEHLLRGLVYPSEGIQASVCYLYGKLYSSPVAAEMLSGHFREKLFPLFLSILDGAQTKELQINCLGLLRQLLKYDLFVSMIMNQDGLGESAKNIEGSSGNTSLPLVLKKLLLSRDETLQVASAHCITAVLVHSPAKHASAFIHADIPEFLFEHLSSSSEVLVWSSCNCLTLLVEEPLFFSKCHTVYGIEAVVRSLQGSLKMNNIELHKQGLLLFAEILTRQPEEIKLFTSSAMCRDAGRALQEAVSSPVLEVAAEALKATSAFLRKDHQSTPPVQYGELQALLEAMLNRCAEFSQTLLSRRPLGHASSRDSEKAILQRGKFLLSTLEGFRSACRLAIEFQSEPSAQENPFTAPSAKKEDTLEAFSEFLLSACDSLCIPMVMRHLEQTTHPALMEVFLSILHNLFVIVPHMKEKFSKKLASSSFIRLTLELKARFCSGLSHSALNQVCSNFLYYMCLNLLSAPEKTGPPSKEELSAVSELLQHGLPQISSRSPESLAFLSDRQYMEGAARQRQYCILLLFYLAYIHEDRFVSEAELFEAVQSFLLSLQDQGERPPLVVFKASIYLLAICQDKDNTLRETMVSAIRKFLEGIPDLQLVYTHHPLLLRFFLLYPELMSRYGHRVLELWFFWEESSYEELDDVTSAGQPALPASLVVLFQLLRSIPSILLILLDLIYSSPVDTAHKVLISLRTFLRRNEDIQVGGLIRGHFLLILQRLLVEHGASPSGASGNLPLLLSLLSLMQLRNVSEQELDSVAMKLLHQVSKLCGKCSPTDVDILQPSFNFLYWSLHQTTPSSQKRAAAVLLSSTGLMELLEKMLALTLAKADSPRTALLCSAWLLTASFSAQQHKGSLQVHQTLSVEMDQVLKALSFPKKKAALLSAAILCFLRTALRQSFSSALVALVPSGAQPLPATKDTVLAPLRMSQVRSLVIGLQNLLVQKDPLLSQACVGCLEALLDYLDARSPDIALHVASQPWNRFLLFTLLDAGENSFLRPEILRLMTLFMRYRSSSVLSHEEVGDVLQGVALADLSTLSNTTLQALHGFFQQLQSMGHLADHSMAQTLQASLEGLPPSTSSGQPPLQDMLCLGGVAVSLSHIRN</sequence>
<comment type="function">
    <text evidence="1">Required for normal meiotic chromosome synapsis. May be involved in the formation of meiotic double-strand breaks (DSBs) in spermatocytes (By similarity).</text>
</comment>
<comment type="alternative products">
    <event type="alternative splicing"/>
    <isoform>
        <id>Q5TIA1-1</id>
        <name evidence="2">1</name>
        <sequence type="displayed"/>
    </isoform>
    <isoform>
        <id>Q5TIA1-2</id>
        <name evidence="5">2</name>
        <name evidence="5">Long</name>
        <sequence type="described" ref="VSP_052885"/>
    </isoform>
    <isoform>
        <id>Q5TIA1-3</id>
        <name evidence="5">3</name>
        <name evidence="5">Short</name>
        <sequence type="described" ref="VSP_052885 VSP_052889"/>
    </isoform>
    <isoform>
        <id>Q5TIA1-4</id>
        <name evidence="4">4</name>
        <sequence type="described" ref="VSP_052887 VSP_052888"/>
    </isoform>
    <isoform>
        <id>Q5TIA1-5</id>
        <name evidence="3">5</name>
        <sequence type="described" ref="VSP_052884 VSP_052891"/>
    </isoform>
    <isoform>
        <id>Q5TIA1-6</id>
        <name evidence="4">6</name>
        <sequence type="described" ref="VSP_052886"/>
    </isoform>
    <isoform>
        <id>Q5TIA1-7</id>
        <name evidence="2 4">7</name>
        <sequence type="described" ref="VSP_052883 VSP_052890"/>
    </isoform>
</comment>
<comment type="tissue specificity">
    <text evidence="5 7">Expressed predominantly in testis. Weakly expressed in spleen and thymus. Expressed in the ovaries, Fallopian tubes and uterus (PubMed:30388401).</text>
</comment>
<comment type="disease" evidence="7">
    <disease id="DI-05567">
        <name>Hydatidiform mole, recurrent, 3</name>
        <acronym>HYDM3</acronym>
        <description>A disorder characterized by excessive trophoblast development that produces a growing mass of tissue inside the uterus at the beginning of a pregnancy. It leads to abnormal pregnancies with no embryo, and cystic degeneration of the chorionic villi.</description>
        <dbReference type="MIM" id="618431"/>
    </disease>
    <text>The disease is caused by variants affecting the gene represented in this entry.</text>
</comment>
<comment type="disease">
    <text evidence="5 6">Susceptibility to azoospermia may be associated with MEI1 variations.</text>
</comment>
<comment type="sequence caution" evidence="13">
    <conflict type="erroneous initiation">
        <sequence resource="EMBL-CDS" id="AAH25400"/>
    </conflict>
</comment>
<comment type="sequence caution" evidence="13">
    <conflict type="erroneous initiation">
        <sequence resource="EMBL-CDS" id="AAH35720"/>
    </conflict>
</comment>